<keyword id="KW-0004">4Fe-4S</keyword>
<keyword id="KW-0963">Cytoplasm</keyword>
<keyword id="KW-1015">Disulfide bond</keyword>
<keyword id="KW-0408">Iron</keyword>
<keyword id="KW-0411">Iron-sulfur</keyword>
<keyword id="KW-0479">Metal-binding</keyword>
<keyword id="KW-0489">Methyltransferase</keyword>
<keyword id="KW-1185">Reference proteome</keyword>
<keyword id="KW-0698">rRNA processing</keyword>
<keyword id="KW-0949">S-adenosyl-L-methionine</keyword>
<keyword id="KW-0808">Transferase</keyword>
<keyword id="KW-0819">tRNA processing</keyword>
<name>RLMN_SYNS9</name>
<proteinExistence type="inferred from homology"/>
<comment type="function">
    <text evidence="1">Specifically methylates position 2 of adenine 2503 in 23S rRNA and position 2 of adenine 37 in tRNAs.</text>
</comment>
<comment type="catalytic activity">
    <reaction evidence="1">
        <text>adenosine(2503) in 23S rRNA + 2 reduced [2Fe-2S]-[ferredoxin] + 2 S-adenosyl-L-methionine = 2-methyladenosine(2503) in 23S rRNA + 5'-deoxyadenosine + L-methionine + 2 oxidized [2Fe-2S]-[ferredoxin] + S-adenosyl-L-homocysteine</text>
        <dbReference type="Rhea" id="RHEA:42916"/>
        <dbReference type="Rhea" id="RHEA-COMP:10000"/>
        <dbReference type="Rhea" id="RHEA-COMP:10001"/>
        <dbReference type="Rhea" id="RHEA-COMP:10152"/>
        <dbReference type="Rhea" id="RHEA-COMP:10282"/>
        <dbReference type="ChEBI" id="CHEBI:17319"/>
        <dbReference type="ChEBI" id="CHEBI:33737"/>
        <dbReference type="ChEBI" id="CHEBI:33738"/>
        <dbReference type="ChEBI" id="CHEBI:57844"/>
        <dbReference type="ChEBI" id="CHEBI:57856"/>
        <dbReference type="ChEBI" id="CHEBI:59789"/>
        <dbReference type="ChEBI" id="CHEBI:74411"/>
        <dbReference type="ChEBI" id="CHEBI:74497"/>
        <dbReference type="EC" id="2.1.1.192"/>
    </reaction>
</comment>
<comment type="catalytic activity">
    <reaction evidence="1">
        <text>adenosine(37) in tRNA + 2 reduced [2Fe-2S]-[ferredoxin] + 2 S-adenosyl-L-methionine = 2-methyladenosine(37) in tRNA + 5'-deoxyadenosine + L-methionine + 2 oxidized [2Fe-2S]-[ferredoxin] + S-adenosyl-L-homocysteine</text>
        <dbReference type="Rhea" id="RHEA:43332"/>
        <dbReference type="Rhea" id="RHEA-COMP:10000"/>
        <dbReference type="Rhea" id="RHEA-COMP:10001"/>
        <dbReference type="Rhea" id="RHEA-COMP:10162"/>
        <dbReference type="Rhea" id="RHEA-COMP:10485"/>
        <dbReference type="ChEBI" id="CHEBI:17319"/>
        <dbReference type="ChEBI" id="CHEBI:33737"/>
        <dbReference type="ChEBI" id="CHEBI:33738"/>
        <dbReference type="ChEBI" id="CHEBI:57844"/>
        <dbReference type="ChEBI" id="CHEBI:57856"/>
        <dbReference type="ChEBI" id="CHEBI:59789"/>
        <dbReference type="ChEBI" id="CHEBI:74411"/>
        <dbReference type="ChEBI" id="CHEBI:74497"/>
        <dbReference type="EC" id="2.1.1.192"/>
    </reaction>
</comment>
<comment type="cofactor">
    <cofactor evidence="1">
        <name>[4Fe-4S] cluster</name>
        <dbReference type="ChEBI" id="CHEBI:49883"/>
    </cofactor>
    <text evidence="1">Binds 1 [4Fe-4S] cluster. The cluster is coordinated with 3 cysteines and an exchangeable S-adenosyl-L-methionine.</text>
</comment>
<comment type="subcellular location">
    <subcellularLocation>
        <location evidence="1">Cytoplasm</location>
    </subcellularLocation>
</comment>
<comment type="miscellaneous">
    <text evidence="1">Reaction proceeds by a ping-pong mechanism involving intermediate methylation of a conserved cysteine residue.</text>
</comment>
<comment type="similarity">
    <text evidence="1">Belongs to the radical SAM superfamily. RlmN family.</text>
</comment>
<sequence length="351" mass="39107">MKNVLLGRSAAELEDWAVAQGHKSFRGRQIHDWLYNKGVKSLSEISALPKQWRTELEAQTFRVGRLKLVHQSVAADATTKLLLATDDGETIETVGIPTDQRLTVCISSQVGCPMACRFCATGKSGLQRSLATHEIVDQVLSVREAMDRRPSHVVFMGMGEPLLNSEAVLETIRCLNTDLGIGQRRITVSTVGVPKTLPQLAELAMEKLGRAQFTLAVSLHAPNQQLREELIPTAHAYPYDDLLDDCRHYLDLTGRRVSFEYILLGELNDHPEHAAELADRVGGFQSHVNLIAYNPIEEEEFKRPTSQRIEAFRRVLERRGVAVSLRASRGLDQNAACGQLRRQHLTGSDLT</sequence>
<reference key="1">
    <citation type="submission" date="2005-08" db="EMBL/GenBank/DDBJ databases">
        <title>Complete sequence of Synechococcus sp. CC9902.</title>
        <authorList>
            <person name="Copeland A."/>
            <person name="Lucas S."/>
            <person name="Lapidus A."/>
            <person name="Barry K."/>
            <person name="Detter J.C."/>
            <person name="Glavina T."/>
            <person name="Hammon N."/>
            <person name="Israni S."/>
            <person name="Pitluck S."/>
            <person name="Martinez M."/>
            <person name="Schmutz J."/>
            <person name="Larimer F."/>
            <person name="Land M."/>
            <person name="Kyrpides N."/>
            <person name="Ivanova N."/>
            <person name="Richardson P."/>
        </authorList>
    </citation>
    <scope>NUCLEOTIDE SEQUENCE [LARGE SCALE GENOMIC DNA]</scope>
    <source>
        <strain>CC9902</strain>
    </source>
</reference>
<accession>Q3AZA0</accession>
<organism>
    <name type="scientific">Synechococcus sp. (strain CC9902)</name>
    <dbReference type="NCBI Taxonomy" id="316279"/>
    <lineage>
        <taxon>Bacteria</taxon>
        <taxon>Bacillati</taxon>
        <taxon>Cyanobacteriota</taxon>
        <taxon>Cyanophyceae</taxon>
        <taxon>Synechococcales</taxon>
        <taxon>Synechococcaceae</taxon>
        <taxon>Synechococcus</taxon>
    </lineage>
</organism>
<dbReference type="EC" id="2.1.1.192" evidence="1"/>
<dbReference type="EMBL" id="CP000097">
    <property type="protein sequence ID" value="ABB25577.1"/>
    <property type="molecule type" value="Genomic_DNA"/>
</dbReference>
<dbReference type="RefSeq" id="WP_011359422.1">
    <property type="nucleotide sequence ID" value="NC_007513.1"/>
</dbReference>
<dbReference type="SMR" id="Q3AZA0"/>
<dbReference type="STRING" id="316279.Syncc9902_0609"/>
<dbReference type="KEGG" id="sye:Syncc9902_0609"/>
<dbReference type="eggNOG" id="COG0820">
    <property type="taxonomic scope" value="Bacteria"/>
</dbReference>
<dbReference type="HOGENOM" id="CLU_029101_1_1_3"/>
<dbReference type="OrthoDB" id="9793973at2"/>
<dbReference type="Proteomes" id="UP000002712">
    <property type="component" value="Chromosome"/>
</dbReference>
<dbReference type="GO" id="GO:0005737">
    <property type="term" value="C:cytoplasm"/>
    <property type="evidence" value="ECO:0007669"/>
    <property type="project" value="UniProtKB-SubCell"/>
</dbReference>
<dbReference type="GO" id="GO:0051539">
    <property type="term" value="F:4 iron, 4 sulfur cluster binding"/>
    <property type="evidence" value="ECO:0007669"/>
    <property type="project" value="UniProtKB-UniRule"/>
</dbReference>
<dbReference type="GO" id="GO:0046872">
    <property type="term" value="F:metal ion binding"/>
    <property type="evidence" value="ECO:0007669"/>
    <property type="project" value="UniProtKB-KW"/>
</dbReference>
<dbReference type="GO" id="GO:0070040">
    <property type="term" value="F:rRNA (adenine(2503)-C2-)-methyltransferase activity"/>
    <property type="evidence" value="ECO:0007669"/>
    <property type="project" value="UniProtKB-UniRule"/>
</dbReference>
<dbReference type="GO" id="GO:0019843">
    <property type="term" value="F:rRNA binding"/>
    <property type="evidence" value="ECO:0007669"/>
    <property type="project" value="UniProtKB-UniRule"/>
</dbReference>
<dbReference type="GO" id="GO:0002935">
    <property type="term" value="F:tRNA (adenine(37)-C2)-methyltransferase activity"/>
    <property type="evidence" value="ECO:0007669"/>
    <property type="project" value="UniProtKB-UniRule"/>
</dbReference>
<dbReference type="GO" id="GO:0000049">
    <property type="term" value="F:tRNA binding"/>
    <property type="evidence" value="ECO:0007669"/>
    <property type="project" value="UniProtKB-UniRule"/>
</dbReference>
<dbReference type="GO" id="GO:0070475">
    <property type="term" value="P:rRNA base methylation"/>
    <property type="evidence" value="ECO:0007669"/>
    <property type="project" value="UniProtKB-UniRule"/>
</dbReference>
<dbReference type="GO" id="GO:0030488">
    <property type="term" value="P:tRNA methylation"/>
    <property type="evidence" value="ECO:0007669"/>
    <property type="project" value="UniProtKB-UniRule"/>
</dbReference>
<dbReference type="CDD" id="cd01335">
    <property type="entry name" value="Radical_SAM"/>
    <property type="match status" value="1"/>
</dbReference>
<dbReference type="FunFam" id="3.20.20.70:FF:000014">
    <property type="entry name" value="Probable dual-specificity RNA methyltransferase RlmN"/>
    <property type="match status" value="1"/>
</dbReference>
<dbReference type="Gene3D" id="1.10.150.530">
    <property type="match status" value="1"/>
</dbReference>
<dbReference type="Gene3D" id="3.20.20.70">
    <property type="entry name" value="Aldolase class I"/>
    <property type="match status" value="1"/>
</dbReference>
<dbReference type="HAMAP" id="MF_01849">
    <property type="entry name" value="RNA_methyltr_RlmN"/>
    <property type="match status" value="1"/>
</dbReference>
<dbReference type="InterPro" id="IPR013785">
    <property type="entry name" value="Aldolase_TIM"/>
</dbReference>
<dbReference type="InterPro" id="IPR040072">
    <property type="entry name" value="Methyltransferase_A"/>
</dbReference>
<dbReference type="InterPro" id="IPR048641">
    <property type="entry name" value="RlmN_N"/>
</dbReference>
<dbReference type="InterPro" id="IPR027492">
    <property type="entry name" value="RNA_MTrfase_RlmN"/>
</dbReference>
<dbReference type="InterPro" id="IPR004383">
    <property type="entry name" value="rRNA_lsu_MTrfase_RlmN/Cfr"/>
</dbReference>
<dbReference type="InterPro" id="IPR007197">
    <property type="entry name" value="rSAM"/>
</dbReference>
<dbReference type="NCBIfam" id="TIGR00048">
    <property type="entry name" value="rRNA_mod_RlmN"/>
    <property type="match status" value="1"/>
</dbReference>
<dbReference type="PANTHER" id="PTHR30544">
    <property type="entry name" value="23S RRNA METHYLTRANSFERASE"/>
    <property type="match status" value="1"/>
</dbReference>
<dbReference type="PANTHER" id="PTHR30544:SF5">
    <property type="entry name" value="RADICAL SAM CORE DOMAIN-CONTAINING PROTEIN"/>
    <property type="match status" value="1"/>
</dbReference>
<dbReference type="Pfam" id="PF04055">
    <property type="entry name" value="Radical_SAM"/>
    <property type="match status" value="1"/>
</dbReference>
<dbReference type="Pfam" id="PF21016">
    <property type="entry name" value="RlmN_N"/>
    <property type="match status" value="1"/>
</dbReference>
<dbReference type="PIRSF" id="PIRSF006004">
    <property type="entry name" value="CHP00048"/>
    <property type="match status" value="1"/>
</dbReference>
<dbReference type="SFLD" id="SFLDF00275">
    <property type="entry name" value="adenosine_C2_methyltransferase"/>
    <property type="match status" value="1"/>
</dbReference>
<dbReference type="SFLD" id="SFLDG01062">
    <property type="entry name" value="methyltransferase_(Class_A)"/>
    <property type="match status" value="1"/>
</dbReference>
<dbReference type="SUPFAM" id="SSF102114">
    <property type="entry name" value="Radical SAM enzymes"/>
    <property type="match status" value="1"/>
</dbReference>
<dbReference type="PROSITE" id="PS51918">
    <property type="entry name" value="RADICAL_SAM"/>
    <property type="match status" value="1"/>
</dbReference>
<protein>
    <recommendedName>
        <fullName evidence="1">Probable dual-specificity RNA methyltransferase RlmN</fullName>
        <ecNumber evidence="1">2.1.1.192</ecNumber>
    </recommendedName>
    <alternativeName>
        <fullName evidence="1">23S rRNA (adenine(2503)-C(2))-methyltransferase</fullName>
    </alternativeName>
    <alternativeName>
        <fullName evidence="1">23S rRNA m2A2503 methyltransferase</fullName>
    </alternativeName>
    <alternativeName>
        <fullName evidence="1">Ribosomal RNA large subunit methyltransferase N</fullName>
    </alternativeName>
    <alternativeName>
        <fullName evidence="1">tRNA (adenine(37)-C(2))-methyltransferase</fullName>
    </alternativeName>
    <alternativeName>
        <fullName evidence="1">tRNA m2A37 methyltransferase</fullName>
    </alternativeName>
</protein>
<evidence type="ECO:0000255" key="1">
    <source>
        <dbReference type="HAMAP-Rule" id="MF_01849"/>
    </source>
</evidence>
<evidence type="ECO:0000255" key="2">
    <source>
        <dbReference type="PROSITE-ProRule" id="PRU01266"/>
    </source>
</evidence>
<gene>
    <name evidence="1" type="primary">rlmN</name>
    <name type="ordered locus">Syncc9902_0609</name>
</gene>
<feature type="chain" id="PRO_0000350485" description="Probable dual-specificity RNA methyltransferase RlmN">
    <location>
        <begin position="1"/>
        <end position="351"/>
    </location>
</feature>
<feature type="domain" description="Radical SAM core" evidence="2">
    <location>
        <begin position="98"/>
        <end position="332"/>
    </location>
</feature>
<feature type="active site" description="Proton acceptor" evidence="1">
    <location>
        <position position="92"/>
    </location>
</feature>
<feature type="active site" description="S-methylcysteine intermediate" evidence="1">
    <location>
        <position position="337"/>
    </location>
</feature>
<feature type="binding site" evidence="1">
    <location>
        <position position="112"/>
    </location>
    <ligand>
        <name>[4Fe-4S] cluster</name>
        <dbReference type="ChEBI" id="CHEBI:49883"/>
        <note>4Fe-4S-S-AdoMet</note>
    </ligand>
</feature>
<feature type="binding site" evidence="1">
    <location>
        <position position="116"/>
    </location>
    <ligand>
        <name>[4Fe-4S] cluster</name>
        <dbReference type="ChEBI" id="CHEBI:49883"/>
        <note>4Fe-4S-S-AdoMet</note>
    </ligand>
</feature>
<feature type="binding site" evidence="1">
    <location>
        <position position="119"/>
    </location>
    <ligand>
        <name>[4Fe-4S] cluster</name>
        <dbReference type="ChEBI" id="CHEBI:49883"/>
        <note>4Fe-4S-S-AdoMet</note>
    </ligand>
</feature>
<feature type="binding site" evidence="1">
    <location>
        <begin position="159"/>
        <end position="160"/>
    </location>
    <ligand>
        <name>S-adenosyl-L-methionine</name>
        <dbReference type="ChEBI" id="CHEBI:59789"/>
    </ligand>
</feature>
<feature type="binding site" evidence="1">
    <location>
        <position position="189"/>
    </location>
    <ligand>
        <name>S-adenosyl-L-methionine</name>
        <dbReference type="ChEBI" id="CHEBI:59789"/>
    </ligand>
</feature>
<feature type="binding site" evidence="1">
    <location>
        <begin position="218"/>
        <end position="220"/>
    </location>
    <ligand>
        <name>S-adenosyl-L-methionine</name>
        <dbReference type="ChEBI" id="CHEBI:59789"/>
    </ligand>
</feature>
<feature type="binding site" evidence="1">
    <location>
        <position position="294"/>
    </location>
    <ligand>
        <name>S-adenosyl-L-methionine</name>
        <dbReference type="ChEBI" id="CHEBI:59789"/>
    </ligand>
</feature>
<feature type="disulfide bond" description="(transient)" evidence="1">
    <location>
        <begin position="105"/>
        <end position="337"/>
    </location>
</feature>